<feature type="chain" id="PRO_1000072768" description="Probable glycine dehydrogenase (decarboxylating) subunit 1">
    <location>
        <begin position="1"/>
        <end position="446"/>
    </location>
</feature>
<dbReference type="EC" id="1.4.4.2" evidence="1"/>
<dbReference type="EMBL" id="CP000612">
    <property type="protein sequence ID" value="ABO49261.1"/>
    <property type="molecule type" value="Genomic_DNA"/>
</dbReference>
<dbReference type="RefSeq" id="WP_011877097.1">
    <property type="nucleotide sequence ID" value="NC_009253.1"/>
</dbReference>
<dbReference type="SMR" id="A4J2F8"/>
<dbReference type="STRING" id="349161.Dred_0722"/>
<dbReference type="KEGG" id="drm:Dred_0722"/>
<dbReference type="eggNOG" id="COG0403">
    <property type="taxonomic scope" value="Bacteria"/>
</dbReference>
<dbReference type="HOGENOM" id="CLU_004620_0_2_9"/>
<dbReference type="OrthoDB" id="9771867at2"/>
<dbReference type="Proteomes" id="UP000001556">
    <property type="component" value="Chromosome"/>
</dbReference>
<dbReference type="GO" id="GO:0004375">
    <property type="term" value="F:glycine dehydrogenase (decarboxylating) activity"/>
    <property type="evidence" value="ECO:0007669"/>
    <property type="project" value="UniProtKB-EC"/>
</dbReference>
<dbReference type="GO" id="GO:0019464">
    <property type="term" value="P:glycine decarboxylation via glycine cleavage system"/>
    <property type="evidence" value="ECO:0007669"/>
    <property type="project" value="UniProtKB-UniRule"/>
</dbReference>
<dbReference type="GO" id="GO:0009116">
    <property type="term" value="P:nucleoside metabolic process"/>
    <property type="evidence" value="ECO:0007669"/>
    <property type="project" value="InterPro"/>
</dbReference>
<dbReference type="CDD" id="cd00613">
    <property type="entry name" value="GDC-P"/>
    <property type="match status" value="1"/>
</dbReference>
<dbReference type="Gene3D" id="3.90.1150.10">
    <property type="entry name" value="Aspartate Aminotransferase, domain 1"/>
    <property type="match status" value="1"/>
</dbReference>
<dbReference type="Gene3D" id="3.40.640.10">
    <property type="entry name" value="Type I PLP-dependent aspartate aminotransferase-like (Major domain)"/>
    <property type="match status" value="1"/>
</dbReference>
<dbReference type="HAMAP" id="MF_00712">
    <property type="entry name" value="GcvPA"/>
    <property type="match status" value="1"/>
</dbReference>
<dbReference type="InterPro" id="IPR023010">
    <property type="entry name" value="GcvPA"/>
</dbReference>
<dbReference type="InterPro" id="IPR049315">
    <property type="entry name" value="GDC-P_N"/>
</dbReference>
<dbReference type="InterPro" id="IPR020581">
    <property type="entry name" value="GDC_P"/>
</dbReference>
<dbReference type="InterPro" id="IPR015424">
    <property type="entry name" value="PyrdxlP-dep_Trfase"/>
</dbReference>
<dbReference type="InterPro" id="IPR015421">
    <property type="entry name" value="PyrdxlP-dep_Trfase_major"/>
</dbReference>
<dbReference type="InterPro" id="IPR015422">
    <property type="entry name" value="PyrdxlP-dep_Trfase_small"/>
</dbReference>
<dbReference type="NCBIfam" id="NF001696">
    <property type="entry name" value="PRK00451.1"/>
    <property type="match status" value="1"/>
</dbReference>
<dbReference type="PANTHER" id="PTHR42806">
    <property type="entry name" value="GLYCINE CLEAVAGE SYSTEM P-PROTEIN"/>
    <property type="match status" value="1"/>
</dbReference>
<dbReference type="PANTHER" id="PTHR42806:SF1">
    <property type="entry name" value="GLYCINE DEHYDROGENASE (DECARBOXYLATING)"/>
    <property type="match status" value="1"/>
</dbReference>
<dbReference type="Pfam" id="PF02347">
    <property type="entry name" value="GDC-P"/>
    <property type="match status" value="1"/>
</dbReference>
<dbReference type="PIRSF" id="PIRSF006815">
    <property type="entry name" value="GcvPA"/>
    <property type="match status" value="1"/>
</dbReference>
<dbReference type="SUPFAM" id="SSF53383">
    <property type="entry name" value="PLP-dependent transferases"/>
    <property type="match status" value="1"/>
</dbReference>
<accession>A4J2F8</accession>
<protein>
    <recommendedName>
        <fullName evidence="1">Probable glycine dehydrogenase (decarboxylating) subunit 1</fullName>
        <ecNumber evidence="1">1.4.4.2</ecNumber>
    </recommendedName>
    <alternativeName>
        <fullName evidence="1">Glycine cleavage system P-protein subunit 1</fullName>
    </alternativeName>
    <alternativeName>
        <fullName evidence="1">Glycine decarboxylase subunit 1</fullName>
    </alternativeName>
    <alternativeName>
        <fullName evidence="1">Glycine dehydrogenase (aminomethyl-transferring) subunit 1</fullName>
    </alternativeName>
</protein>
<evidence type="ECO:0000255" key="1">
    <source>
        <dbReference type="HAMAP-Rule" id="MF_00712"/>
    </source>
</evidence>
<gene>
    <name evidence="1" type="primary">gcvPA</name>
    <name type="ordered locus">Dred_0722</name>
</gene>
<comment type="function">
    <text evidence="1">The glycine cleavage system catalyzes the degradation of glycine. The P protein binds the alpha-amino group of glycine through its pyridoxal phosphate cofactor; CO(2) is released and the remaining methylamine moiety is then transferred to the lipoamide cofactor of the H protein.</text>
</comment>
<comment type="catalytic activity">
    <reaction evidence="1">
        <text>N(6)-[(R)-lipoyl]-L-lysyl-[glycine-cleavage complex H protein] + glycine + H(+) = N(6)-[(R)-S(8)-aminomethyldihydrolipoyl]-L-lysyl-[glycine-cleavage complex H protein] + CO2</text>
        <dbReference type="Rhea" id="RHEA:24304"/>
        <dbReference type="Rhea" id="RHEA-COMP:10494"/>
        <dbReference type="Rhea" id="RHEA-COMP:10495"/>
        <dbReference type="ChEBI" id="CHEBI:15378"/>
        <dbReference type="ChEBI" id="CHEBI:16526"/>
        <dbReference type="ChEBI" id="CHEBI:57305"/>
        <dbReference type="ChEBI" id="CHEBI:83099"/>
        <dbReference type="ChEBI" id="CHEBI:83143"/>
        <dbReference type="EC" id="1.4.4.2"/>
    </reaction>
</comment>
<comment type="subunit">
    <text evidence="1">The glycine cleavage system is composed of four proteins: P, T, L and H. In this organism, the P 'protein' is a heterodimer of two subunits.</text>
</comment>
<comment type="similarity">
    <text evidence="1">Belongs to the GcvP family. N-terminal subunit subfamily.</text>
</comment>
<organism>
    <name type="scientific">Desulforamulus reducens (strain ATCC BAA-1160 / DSM 100696 / MI-1)</name>
    <name type="common">Desulfotomaculum reducens</name>
    <dbReference type="NCBI Taxonomy" id="349161"/>
    <lineage>
        <taxon>Bacteria</taxon>
        <taxon>Bacillati</taxon>
        <taxon>Bacillota</taxon>
        <taxon>Clostridia</taxon>
        <taxon>Eubacteriales</taxon>
        <taxon>Peptococcaceae</taxon>
        <taxon>Desulforamulus</taxon>
    </lineage>
</organism>
<reference key="1">
    <citation type="submission" date="2007-03" db="EMBL/GenBank/DDBJ databases">
        <title>Complete sequence of Desulfotomaculum reducens MI-1.</title>
        <authorList>
            <consortium name="US DOE Joint Genome Institute"/>
            <person name="Copeland A."/>
            <person name="Lucas S."/>
            <person name="Lapidus A."/>
            <person name="Barry K."/>
            <person name="Detter J.C."/>
            <person name="Glavina del Rio T."/>
            <person name="Hammon N."/>
            <person name="Israni S."/>
            <person name="Dalin E."/>
            <person name="Tice H."/>
            <person name="Pitluck S."/>
            <person name="Sims D."/>
            <person name="Brettin T."/>
            <person name="Bruce D."/>
            <person name="Han C."/>
            <person name="Tapia R."/>
            <person name="Schmutz J."/>
            <person name="Larimer F."/>
            <person name="Land M."/>
            <person name="Hauser L."/>
            <person name="Kyrpides N."/>
            <person name="Kim E."/>
            <person name="Tebo B.M."/>
            <person name="Richardson P."/>
        </authorList>
    </citation>
    <scope>NUCLEOTIDE SEQUENCE [LARGE SCALE GENOMIC DNA]</scope>
    <source>
        <strain>ATCC BAA-1160 / DSM 100696 / MI-1</strain>
    </source>
</reference>
<keyword id="KW-0560">Oxidoreductase</keyword>
<keyword id="KW-1185">Reference proteome</keyword>
<name>GCSPA_DESRM</name>
<proteinExistence type="inferred from homology"/>
<sequence>MKFIPHTDEERRQMLKHLAVENTDQLFKDIPSELRLNRDLAVEGGLSEMELQSHMNSLAGLNTGVDQTICFLGAGAYDHYIPSAVKHILSRSEFYTAYTPYQPEISQGVLQSIFEYQSMICLLTGMDAANASMYDGASALAEAALMACAVTRRDKVLVASTLHPEYREVVKTYLHGPGIEISEIAYQEGLSQLADIDQKLDKKTAAVLVQYPNFFGCIEDLGKIAEQAHAKGALLVVCVDPIALGILKSPGQCGADIVVGEGQSLGIPLSYGGPYLGFMACKDKYLRKMPGRIVGQTVDVEGRRGYVLTLQAREQHIRRDKATSNICSNQALCALAATVYLSLVGRQGFKQVAELCLQKTAYAKELLAALPGYQLPWQTPVFKEFVLKTKEAPEVINRELLKENILGGLDLGGYYPELAGHMLFCVTEKRSRREIELLAARLGAIS</sequence>